<accession>B4SUZ3</accession>
<protein>
    <recommendedName>
        <fullName evidence="1">UPF0325 protein YaeH</fullName>
    </recommendedName>
</protein>
<name>YAEH_SALNS</name>
<dbReference type="EMBL" id="CP001113">
    <property type="protein sequence ID" value="ACF63013.1"/>
    <property type="molecule type" value="Genomic_DNA"/>
</dbReference>
<dbReference type="RefSeq" id="WP_000272193.1">
    <property type="nucleotide sequence ID" value="NZ_CCMR01000003.1"/>
</dbReference>
<dbReference type="SMR" id="B4SUZ3"/>
<dbReference type="KEGG" id="see:SNSL254_A0232"/>
<dbReference type="HOGENOM" id="CLU_136774_0_0_6"/>
<dbReference type="Proteomes" id="UP000008824">
    <property type="component" value="Chromosome"/>
</dbReference>
<dbReference type="HAMAP" id="MF_01519">
    <property type="entry name" value="UPF0325"/>
    <property type="match status" value="1"/>
</dbReference>
<dbReference type="InterPro" id="IPR020911">
    <property type="entry name" value="UPF0325"/>
</dbReference>
<dbReference type="NCBIfam" id="NF010213">
    <property type="entry name" value="PRK13677.1"/>
    <property type="match status" value="1"/>
</dbReference>
<dbReference type="Pfam" id="PF11944">
    <property type="entry name" value="DUF3461"/>
    <property type="match status" value="1"/>
</dbReference>
<proteinExistence type="inferred from homology"/>
<organism>
    <name type="scientific">Salmonella newport (strain SL254)</name>
    <dbReference type="NCBI Taxonomy" id="423368"/>
    <lineage>
        <taxon>Bacteria</taxon>
        <taxon>Pseudomonadati</taxon>
        <taxon>Pseudomonadota</taxon>
        <taxon>Gammaproteobacteria</taxon>
        <taxon>Enterobacterales</taxon>
        <taxon>Enterobacteriaceae</taxon>
        <taxon>Salmonella</taxon>
    </lineage>
</organism>
<feature type="chain" id="PRO_1000198440" description="UPF0325 protein YaeH">
    <location>
        <begin position="1"/>
        <end position="128"/>
    </location>
</feature>
<sequence>MYDNLKSLGITNPEEIDRYSLRQEANNDILKIYFQKDRGEFFAKSVKFKYPRQRKTVVADGIGQGYKEVQEISPNLRYVIDELDQICQRDRSELDLKRKILDDLRHLESVVANKISEIEADLDKLTRK</sequence>
<comment type="similarity">
    <text evidence="1">Belongs to the UPF0325 family.</text>
</comment>
<reference key="1">
    <citation type="journal article" date="2011" name="J. Bacteriol.">
        <title>Comparative genomics of 28 Salmonella enterica isolates: evidence for CRISPR-mediated adaptive sublineage evolution.</title>
        <authorList>
            <person name="Fricke W.F."/>
            <person name="Mammel M.K."/>
            <person name="McDermott P.F."/>
            <person name="Tartera C."/>
            <person name="White D.G."/>
            <person name="Leclerc J.E."/>
            <person name="Ravel J."/>
            <person name="Cebula T.A."/>
        </authorList>
    </citation>
    <scope>NUCLEOTIDE SEQUENCE [LARGE SCALE GENOMIC DNA]</scope>
    <source>
        <strain>SL254</strain>
    </source>
</reference>
<gene>
    <name evidence="1" type="primary">yaeH</name>
    <name type="ordered locus">SNSL254_A0232</name>
</gene>
<evidence type="ECO:0000255" key="1">
    <source>
        <dbReference type="HAMAP-Rule" id="MF_01519"/>
    </source>
</evidence>